<name>DAPE_XANC8</name>
<protein>
    <recommendedName>
        <fullName evidence="1">Succinyl-diaminopimelate desuccinylase</fullName>
        <shortName evidence="1">SDAP desuccinylase</shortName>
        <ecNumber evidence="1">3.5.1.18</ecNumber>
    </recommendedName>
    <alternativeName>
        <fullName evidence="1">N-succinyl-LL-2,6-diaminoheptanedioate amidohydrolase</fullName>
    </alternativeName>
</protein>
<organism>
    <name type="scientific">Xanthomonas campestris pv. campestris (strain 8004)</name>
    <dbReference type="NCBI Taxonomy" id="314565"/>
    <lineage>
        <taxon>Bacteria</taxon>
        <taxon>Pseudomonadati</taxon>
        <taxon>Pseudomonadota</taxon>
        <taxon>Gammaproteobacteria</taxon>
        <taxon>Lysobacterales</taxon>
        <taxon>Lysobacteraceae</taxon>
        <taxon>Xanthomonas</taxon>
    </lineage>
</organism>
<accession>Q4USS4</accession>
<sequence>MTSDVLQLTCDLIARASVTPADAGCQALIADRLSAAGFACEHLRLGAVDNLWATHGSGAPVLVLLGHTDVVPPGPASDWASDPFAPQVRDGVLYGRGAADMKGSVAAFVVAAEQFVAAHPEHPGTLAVLLTSDEEGDAIDGVRHVARLFAERGQQIDWCITGEPSSTERLGDLLRVGRRGSLSGNLIVKGVQGHVAYPHKARNPIHLAAPALAELIARQWDDGFESFPPTSLQISNIHAGTGANNVIPGELQVAFNLRYTPHWNAETLEREIVALLERHALTYTLAWHRSGEPFYTPEGTLRRVAREVLGAFVGAPPEESTGGGTSDARFIAPLGAQCIEVGPVNASIHQVDEHVRVADLEALPALYRTLVERLLV</sequence>
<feature type="chain" id="PRO_0000375783" description="Succinyl-diaminopimelate desuccinylase">
    <location>
        <begin position="1"/>
        <end position="376"/>
    </location>
</feature>
<feature type="active site" evidence="1">
    <location>
        <position position="69"/>
    </location>
</feature>
<feature type="active site" description="Proton acceptor" evidence="1">
    <location>
        <position position="134"/>
    </location>
</feature>
<feature type="binding site" evidence="1">
    <location>
        <position position="67"/>
    </location>
    <ligand>
        <name>Zn(2+)</name>
        <dbReference type="ChEBI" id="CHEBI:29105"/>
        <label>1</label>
    </ligand>
</feature>
<feature type="binding site" evidence="1">
    <location>
        <position position="100"/>
    </location>
    <ligand>
        <name>Zn(2+)</name>
        <dbReference type="ChEBI" id="CHEBI:29105"/>
        <label>1</label>
    </ligand>
</feature>
<feature type="binding site" evidence="1">
    <location>
        <position position="100"/>
    </location>
    <ligand>
        <name>Zn(2+)</name>
        <dbReference type="ChEBI" id="CHEBI:29105"/>
        <label>2</label>
    </ligand>
</feature>
<feature type="binding site" evidence="1">
    <location>
        <position position="135"/>
    </location>
    <ligand>
        <name>Zn(2+)</name>
        <dbReference type="ChEBI" id="CHEBI:29105"/>
        <label>2</label>
    </ligand>
</feature>
<feature type="binding site" evidence="1">
    <location>
        <position position="163"/>
    </location>
    <ligand>
        <name>Zn(2+)</name>
        <dbReference type="ChEBI" id="CHEBI:29105"/>
        <label>1</label>
    </ligand>
</feature>
<feature type="binding site" evidence="1">
    <location>
        <position position="349"/>
    </location>
    <ligand>
        <name>Zn(2+)</name>
        <dbReference type="ChEBI" id="CHEBI:29105"/>
        <label>2</label>
    </ligand>
</feature>
<keyword id="KW-0028">Amino-acid biosynthesis</keyword>
<keyword id="KW-0170">Cobalt</keyword>
<keyword id="KW-0220">Diaminopimelate biosynthesis</keyword>
<keyword id="KW-0378">Hydrolase</keyword>
<keyword id="KW-0457">Lysine biosynthesis</keyword>
<keyword id="KW-0479">Metal-binding</keyword>
<keyword id="KW-0862">Zinc</keyword>
<comment type="function">
    <text evidence="1">Catalyzes the hydrolysis of N-succinyl-L,L-diaminopimelic acid (SDAP), forming succinate and LL-2,6-diaminopimelate (DAP), an intermediate involved in the bacterial biosynthesis of lysine and meso-diaminopimelic acid, an essential component of bacterial cell walls.</text>
</comment>
<comment type="catalytic activity">
    <reaction evidence="1">
        <text>N-succinyl-(2S,6S)-2,6-diaminopimelate + H2O = (2S,6S)-2,6-diaminopimelate + succinate</text>
        <dbReference type="Rhea" id="RHEA:22608"/>
        <dbReference type="ChEBI" id="CHEBI:15377"/>
        <dbReference type="ChEBI" id="CHEBI:30031"/>
        <dbReference type="ChEBI" id="CHEBI:57609"/>
        <dbReference type="ChEBI" id="CHEBI:58087"/>
        <dbReference type="EC" id="3.5.1.18"/>
    </reaction>
</comment>
<comment type="cofactor">
    <cofactor evidence="1">
        <name>Zn(2+)</name>
        <dbReference type="ChEBI" id="CHEBI:29105"/>
    </cofactor>
    <cofactor evidence="1">
        <name>Co(2+)</name>
        <dbReference type="ChEBI" id="CHEBI:48828"/>
    </cofactor>
    <text evidence="1">Binds 2 Zn(2+) or Co(2+) ions per subunit.</text>
</comment>
<comment type="pathway">
    <text evidence="1">Amino-acid biosynthesis; L-lysine biosynthesis via DAP pathway; LL-2,6-diaminopimelate from (S)-tetrahydrodipicolinate (succinylase route): step 3/3.</text>
</comment>
<comment type="subunit">
    <text evidence="1">Homodimer.</text>
</comment>
<comment type="similarity">
    <text evidence="1">Belongs to the peptidase M20A family. DapE subfamily.</text>
</comment>
<comment type="sequence caution" evidence="2">
    <conflict type="erroneous initiation">
        <sequence resource="EMBL-CDS" id="AAY49899"/>
    </conflict>
</comment>
<reference key="1">
    <citation type="journal article" date="2005" name="Genome Res.">
        <title>Comparative and functional genomic analyses of the pathogenicity of phytopathogen Xanthomonas campestris pv. campestris.</title>
        <authorList>
            <person name="Qian W."/>
            <person name="Jia Y."/>
            <person name="Ren S.-X."/>
            <person name="He Y.-Q."/>
            <person name="Feng J.-X."/>
            <person name="Lu L.-F."/>
            <person name="Sun Q."/>
            <person name="Ying G."/>
            <person name="Tang D.-J."/>
            <person name="Tang H."/>
            <person name="Wu W."/>
            <person name="Hao P."/>
            <person name="Wang L."/>
            <person name="Jiang B.-L."/>
            <person name="Zeng S."/>
            <person name="Gu W.-Y."/>
            <person name="Lu G."/>
            <person name="Rong L."/>
            <person name="Tian Y."/>
            <person name="Yao Z."/>
            <person name="Fu G."/>
            <person name="Chen B."/>
            <person name="Fang R."/>
            <person name="Qiang B."/>
            <person name="Chen Z."/>
            <person name="Zhao G.-P."/>
            <person name="Tang J.-L."/>
            <person name="He C."/>
        </authorList>
    </citation>
    <scope>NUCLEOTIDE SEQUENCE [LARGE SCALE GENOMIC DNA]</scope>
    <source>
        <strain>8004</strain>
    </source>
</reference>
<dbReference type="EC" id="3.5.1.18" evidence="1"/>
<dbReference type="EMBL" id="CP000050">
    <property type="protein sequence ID" value="AAY49899.1"/>
    <property type="status" value="ALT_INIT"/>
    <property type="molecule type" value="Genomic_DNA"/>
</dbReference>
<dbReference type="RefSeq" id="WP_040941552.1">
    <property type="nucleotide sequence ID" value="NZ_CP155948.1"/>
</dbReference>
<dbReference type="SMR" id="Q4USS4"/>
<dbReference type="KEGG" id="xcb:XC_2851"/>
<dbReference type="HOGENOM" id="CLU_021802_4_0_6"/>
<dbReference type="UniPathway" id="UPA00034">
    <property type="reaction ID" value="UER00021"/>
</dbReference>
<dbReference type="Proteomes" id="UP000000420">
    <property type="component" value="Chromosome"/>
</dbReference>
<dbReference type="GO" id="GO:0008777">
    <property type="term" value="F:acetylornithine deacetylase activity"/>
    <property type="evidence" value="ECO:0007669"/>
    <property type="project" value="TreeGrafter"/>
</dbReference>
<dbReference type="GO" id="GO:0050897">
    <property type="term" value="F:cobalt ion binding"/>
    <property type="evidence" value="ECO:0007669"/>
    <property type="project" value="UniProtKB-UniRule"/>
</dbReference>
<dbReference type="GO" id="GO:0009014">
    <property type="term" value="F:succinyl-diaminopimelate desuccinylase activity"/>
    <property type="evidence" value="ECO:0007669"/>
    <property type="project" value="UniProtKB-UniRule"/>
</dbReference>
<dbReference type="GO" id="GO:0008270">
    <property type="term" value="F:zinc ion binding"/>
    <property type="evidence" value="ECO:0007669"/>
    <property type="project" value="UniProtKB-UniRule"/>
</dbReference>
<dbReference type="GO" id="GO:0019877">
    <property type="term" value="P:diaminopimelate biosynthetic process"/>
    <property type="evidence" value="ECO:0007669"/>
    <property type="project" value="UniProtKB-UniRule"/>
</dbReference>
<dbReference type="GO" id="GO:0006526">
    <property type="term" value="P:L-arginine biosynthetic process"/>
    <property type="evidence" value="ECO:0007669"/>
    <property type="project" value="TreeGrafter"/>
</dbReference>
<dbReference type="GO" id="GO:0009089">
    <property type="term" value="P:lysine biosynthetic process via diaminopimelate"/>
    <property type="evidence" value="ECO:0007669"/>
    <property type="project" value="UniProtKB-UniRule"/>
</dbReference>
<dbReference type="CDD" id="cd03891">
    <property type="entry name" value="M20_DapE_proteobac"/>
    <property type="match status" value="1"/>
</dbReference>
<dbReference type="FunFam" id="3.40.630.10:FF:000005">
    <property type="entry name" value="Succinyl-diaminopimelate desuccinylase"/>
    <property type="match status" value="1"/>
</dbReference>
<dbReference type="Gene3D" id="3.40.630.10">
    <property type="entry name" value="Zn peptidases"/>
    <property type="match status" value="2"/>
</dbReference>
<dbReference type="HAMAP" id="MF_01690">
    <property type="entry name" value="DapE"/>
    <property type="match status" value="1"/>
</dbReference>
<dbReference type="InterPro" id="IPR001261">
    <property type="entry name" value="ArgE/DapE_CS"/>
</dbReference>
<dbReference type="InterPro" id="IPR036264">
    <property type="entry name" value="Bact_exopeptidase_dim_dom"/>
</dbReference>
<dbReference type="InterPro" id="IPR005941">
    <property type="entry name" value="DapE_proteobac"/>
</dbReference>
<dbReference type="InterPro" id="IPR002933">
    <property type="entry name" value="Peptidase_M20"/>
</dbReference>
<dbReference type="InterPro" id="IPR011650">
    <property type="entry name" value="Peptidase_M20_dimer"/>
</dbReference>
<dbReference type="InterPro" id="IPR050072">
    <property type="entry name" value="Peptidase_M20A"/>
</dbReference>
<dbReference type="NCBIfam" id="TIGR01246">
    <property type="entry name" value="dapE_proteo"/>
    <property type="match status" value="1"/>
</dbReference>
<dbReference type="NCBIfam" id="NF009557">
    <property type="entry name" value="PRK13009.1"/>
    <property type="match status" value="1"/>
</dbReference>
<dbReference type="PANTHER" id="PTHR43808">
    <property type="entry name" value="ACETYLORNITHINE DEACETYLASE"/>
    <property type="match status" value="1"/>
</dbReference>
<dbReference type="PANTHER" id="PTHR43808:SF31">
    <property type="entry name" value="N-ACETYL-L-CITRULLINE DEACETYLASE"/>
    <property type="match status" value="1"/>
</dbReference>
<dbReference type="Pfam" id="PF07687">
    <property type="entry name" value="M20_dimer"/>
    <property type="match status" value="1"/>
</dbReference>
<dbReference type="Pfam" id="PF01546">
    <property type="entry name" value="Peptidase_M20"/>
    <property type="match status" value="1"/>
</dbReference>
<dbReference type="SUPFAM" id="SSF55031">
    <property type="entry name" value="Bacterial exopeptidase dimerisation domain"/>
    <property type="match status" value="1"/>
</dbReference>
<dbReference type="SUPFAM" id="SSF53187">
    <property type="entry name" value="Zn-dependent exopeptidases"/>
    <property type="match status" value="1"/>
</dbReference>
<dbReference type="PROSITE" id="PS00759">
    <property type="entry name" value="ARGE_DAPE_CPG2_2"/>
    <property type="match status" value="1"/>
</dbReference>
<evidence type="ECO:0000255" key="1">
    <source>
        <dbReference type="HAMAP-Rule" id="MF_01690"/>
    </source>
</evidence>
<evidence type="ECO:0000305" key="2"/>
<proteinExistence type="inferred from homology"/>
<gene>
    <name evidence="1" type="primary">dapE</name>
    <name type="ordered locus">XC_2851</name>
</gene>